<comment type="function">
    <text evidence="4 5 6 7 8">Transcriptional activator that binds specifically to the DNA consensus core sequence 5'-AAAG-3' also known as prolamin box (PubMed:16798940). Can activate the expression of genes encoding for the seed storage proteins glutelin, prolamin and globulin. Functions synergistically with RISBZ/BZIP58 to positively regulate quantitatively many seed storage proteins (PubMed:16798940, PubMed:19473328). Functions synergistically with RISBZ1/BZIP58 to positively regulate some metabolic enzymes, such as alanine aminotransferase and pyruvate phosphate dikinase, that are expressed in developing seeds (PubMed:16798940). Functions synergistically with RISBZ1/BZIP58 to positively regulate genes that are key players in the development of aleurone layers (PubMed:19473328). Functions synergistically with RISBZ1/BZIP58 to positively regulate the glutelin GLUD-1 gene in endosperm of developing seeds (PubMed:18980953). Can activate the expression of the bifunctional lysine-degrading enzyme, lysine ketoglutarate reductase/saccharopine dehydrogenase (LKR/SDH), one of the key regulators determining free lysine content in plants (PubMed:21037241). In germinating seeds, involved in the gibberellin-mediated activation of the alpha-amylase AMY1.1/AMY1A gene (PubMed:14500792).</text>
</comment>
<comment type="subunit">
    <text evidence="7">Interacts with RISBZ1/BZIP58.</text>
</comment>
<comment type="subcellular location">
    <subcellularLocation>
        <location evidence="1 7">Nucleus</location>
    </subcellularLocation>
</comment>
<comment type="developmental stage">
    <text evidence="3 5">Expressed in developing seeds from 5 to 30 days after flowering (DAF) (PubMed:16798940). Expressed in germinating seeds up to 5 days after imbibition (PubMed:11470159).</text>
</comment>
<comment type="induction">
    <text evidence="3 5">Induced by gibberellin.</text>
</comment>
<gene>
    <name evidence="9" type="primary">DOF3</name>
    <name type="synonym">RPBF</name>
    <name evidence="12" type="ordered locus">Os02g0252400</name>
    <name evidence="10" type="ordered locus">LOC_Os02g15350</name>
    <name evidence="11" type="ORF">OSJNBa0009N02.17</name>
</gene>
<accession>Q6K537</accession>
<accession>C7DQD4</accession>
<accession>Q9SXG6</accession>
<keyword id="KW-0238">DNA-binding</keyword>
<keyword id="KW-0309">Germination</keyword>
<keyword id="KW-0479">Metal-binding</keyword>
<keyword id="KW-0539">Nucleus</keyword>
<keyword id="KW-1185">Reference proteome</keyword>
<keyword id="KW-0804">Transcription</keyword>
<keyword id="KW-0805">Transcription regulation</keyword>
<keyword id="KW-0862">Zinc</keyword>
<keyword id="KW-0863">Zinc-finger</keyword>
<protein>
    <recommendedName>
        <fullName evidence="10">Dof zinc finger protein 3</fullName>
        <shortName evidence="9">OsDof3</shortName>
    </recommendedName>
    <alternativeName>
        <fullName>Prolamin box-binding factor</fullName>
    </alternativeName>
</protein>
<organism>
    <name type="scientific">Oryza sativa subsp. japonica</name>
    <name type="common">Rice</name>
    <dbReference type="NCBI Taxonomy" id="39947"/>
    <lineage>
        <taxon>Eukaryota</taxon>
        <taxon>Viridiplantae</taxon>
        <taxon>Streptophyta</taxon>
        <taxon>Embryophyta</taxon>
        <taxon>Tracheophyta</taxon>
        <taxon>Spermatophyta</taxon>
        <taxon>Magnoliopsida</taxon>
        <taxon>Liliopsida</taxon>
        <taxon>Poales</taxon>
        <taxon>Poaceae</taxon>
        <taxon>BOP clade</taxon>
        <taxon>Oryzoideae</taxon>
        <taxon>Oryzeae</taxon>
        <taxon>Oryzinae</taxon>
        <taxon>Oryza</taxon>
        <taxon>Oryza sativa</taxon>
    </lineage>
</organism>
<reference key="1">
    <citation type="online journal article" date="1999" name="Plant Gene Register">
        <title>Molecular analysis of rice cDNAs encoding Dof proteins in germinated aleurone cells.</title>
        <authorList>
            <person name="Washio K."/>
        </authorList>
        <locator>PGR99-107</locator>
    </citation>
    <scope>NUCLEOTIDE SEQUENCE [MRNA]</scope>
    <source>
        <strain>cv. Yukihikari</strain>
        <tissue>Aleurone</tissue>
    </source>
</reference>
<reference key="2">
    <citation type="journal article" date="2005" name="Nature">
        <title>The map-based sequence of the rice genome.</title>
        <authorList>
            <consortium name="International rice genome sequencing project (IRGSP)"/>
        </authorList>
    </citation>
    <scope>NUCLEOTIDE SEQUENCE [LARGE SCALE GENOMIC DNA]</scope>
    <source>
        <strain>cv. Nipponbare</strain>
    </source>
</reference>
<reference key="3">
    <citation type="journal article" date="2008" name="Nucleic Acids Res.">
        <title>The rice annotation project database (RAP-DB): 2008 update.</title>
        <authorList>
            <consortium name="The rice annotation project (RAP)"/>
        </authorList>
    </citation>
    <scope>GENOME REANNOTATION</scope>
    <source>
        <strain>cv. Nipponbare</strain>
    </source>
</reference>
<reference key="4">
    <citation type="journal article" date="2013" name="Rice">
        <title>Improvement of the Oryza sativa Nipponbare reference genome using next generation sequence and optical map data.</title>
        <authorList>
            <person name="Kawahara Y."/>
            <person name="de la Bastide M."/>
            <person name="Hamilton J.P."/>
            <person name="Kanamori H."/>
            <person name="McCombie W.R."/>
            <person name="Ouyang S."/>
            <person name="Schwartz D.C."/>
            <person name="Tanaka T."/>
            <person name="Wu J."/>
            <person name="Zhou S."/>
            <person name="Childs K.L."/>
            <person name="Davidson R.M."/>
            <person name="Lin H."/>
            <person name="Quesada-Ocampo L."/>
            <person name="Vaillancourt B."/>
            <person name="Sakai H."/>
            <person name="Lee S.S."/>
            <person name="Kim J."/>
            <person name="Numa H."/>
            <person name="Itoh T."/>
            <person name="Buell C.R."/>
            <person name="Matsumoto T."/>
        </authorList>
    </citation>
    <scope>GENOME REANNOTATION</scope>
    <source>
        <strain>cv. Nipponbare</strain>
    </source>
</reference>
<reference key="5">
    <citation type="submission" date="2009-05" db="EMBL/GenBank/DDBJ databases">
        <title>Oryza sativa japonica group Dof-type zinc finger protein 03 mRNA, partial cds.</title>
        <authorList>
            <person name="Gaur V.S."/>
            <person name="Singh U.S."/>
            <person name="Singh V.K."/>
            <person name="Kumar A."/>
        </authorList>
    </citation>
    <scope>NUCLEOTIDE SEQUENCE [MRNA] OF 196-319</scope>
    <source>
        <strain>cv. Nipponbare</strain>
    </source>
</reference>
<reference key="6">
    <citation type="journal article" date="2001" name="Biochim. Biophys. Acta">
        <title>Identification of Dof proteins with implication in the gibberellin-regulated expression of a peptidase gene following the germination of rice grains.</title>
        <authorList>
            <person name="Washio K."/>
        </authorList>
    </citation>
    <scope>DEVELOPMENTAL STAGE</scope>
    <scope>INDUCTION BY GIBBERELLIN</scope>
</reference>
<reference key="7">
    <citation type="journal article" date="2003" name="Plant Physiol.">
        <title>Functional dissections between GAMYB and Dof transcription factors suggest a role for protein-protein associations in the gibberellin-mediated expression of the RAmy1A gene in the rice aleurone.</title>
        <authorList>
            <person name="Washio K."/>
        </authorList>
    </citation>
    <scope>FUNCTION</scope>
</reference>
<reference key="8">
    <citation type="journal article" date="2006" name="Plant Physiol.">
        <title>Synergism between RPBF Dof and RISBZ1 bZIP activators in the regulation of rice seed expression genes.</title>
        <authorList>
            <person name="Yamamoto M.P."/>
            <person name="Onodera Y."/>
            <person name="Touno S.M."/>
            <person name="Takaiwa F."/>
        </authorList>
    </citation>
    <scope>FUNCTION</scope>
    <scope>DEVELOPMENTAL STAGE</scope>
    <scope>INDUCTION BY GIBBERELLIN</scope>
</reference>
<reference key="9">
    <citation type="journal article" date="2008" name="J. Exp. Bot.">
        <title>Characterization of a new rice glutelin gene GluD-1 expressed in the starchy endosperm.</title>
        <authorList>
            <person name="Kawakatsu T."/>
            <person name="Yamamoto M.P."/>
            <person name="Hirose S."/>
            <person name="Yano M."/>
            <person name="Takaiwa F."/>
        </authorList>
    </citation>
    <scope>FUNCTION</scope>
</reference>
<reference key="10">
    <citation type="journal article" date="2009" name="Plant J.">
        <title>Compensation and interaction between RISBZ1 and RPBF during grain filling in rice.</title>
        <authorList>
            <person name="Kawakatsu T."/>
            <person name="Yamamoto M.P."/>
            <person name="Touno S.M."/>
            <person name="Yasuda H."/>
            <person name="Takaiwa F."/>
        </authorList>
    </citation>
    <scope>FUNCTION</scope>
    <scope>INTERACTION WITH RISBZ1/BZIP58</scope>
    <scope>SUBCELLULAR LOCATION</scope>
</reference>
<reference key="11">
    <citation type="journal article" date="2010" name="Plant Cell Physiol.">
        <title>Differences in transcriptional regulatory mechanisms functioning for free lysine content and seed storage protein accumulation in rice grain.</title>
        <authorList>
            <person name="Kawakatsu T."/>
            <person name="Takaiwa F."/>
        </authorList>
    </citation>
    <scope>FUNCTION</scope>
</reference>
<sequence>MASGGALSPVEEKPTVVKTTKAEQHEEEAAVAVKSAAEMMKKSSPCCPRCNSIKTKFCYYNNYSMAQPRYFCRECRRYWTQGGSLRNVPVGGGCRKSKRSSASSASASAASPPAPAVGAAPPVVPALSSAISKLLQSEPMAAPCADFPNVLPTFVSTGFELPAAAGDRLSLGSFGAFGNLSAAVAAPGGGGGSSTTTSFMDMLRGVGGLFDGVGNSHQMGGNGGGGGSYYAPLITGAGNGMLMPPPPLPPFSGSLMQHGMQGLFANHAMGGGGGGVMNAGEDGSVMAGLGGGQWPPALGGADEQQGGGDGGEAVMTKDTGGGASSSASRPDYFYGWNSAAGGVVAGGGIGGNAAAATGATPWQGLIDSSSAMM</sequence>
<evidence type="ECO:0000255" key="1">
    <source>
        <dbReference type="PROSITE-ProRule" id="PRU00071"/>
    </source>
</evidence>
<evidence type="ECO:0000256" key="2">
    <source>
        <dbReference type="SAM" id="MobiDB-lite"/>
    </source>
</evidence>
<evidence type="ECO:0000269" key="3">
    <source>
    </source>
</evidence>
<evidence type="ECO:0000269" key="4">
    <source>
    </source>
</evidence>
<evidence type="ECO:0000269" key="5">
    <source>
    </source>
</evidence>
<evidence type="ECO:0000269" key="6">
    <source>
    </source>
</evidence>
<evidence type="ECO:0000269" key="7">
    <source>
    </source>
</evidence>
<evidence type="ECO:0000269" key="8">
    <source>
    </source>
</evidence>
<evidence type="ECO:0000303" key="9">
    <source ref="1"/>
</evidence>
<evidence type="ECO:0000305" key="10"/>
<evidence type="ECO:0000312" key="11">
    <source>
        <dbReference type="EMBL" id="BAD19767.1"/>
    </source>
</evidence>
<evidence type="ECO:0000312" key="12">
    <source>
        <dbReference type="EMBL" id="BAF08365.1"/>
    </source>
</evidence>
<proteinExistence type="evidence at protein level"/>
<name>DOF3_ORYSJ</name>
<dbReference type="EMBL" id="AB028131">
    <property type="protein sequence ID" value="BAA78574.2"/>
    <property type="molecule type" value="mRNA"/>
</dbReference>
<dbReference type="EMBL" id="AP005510">
    <property type="protein sequence ID" value="BAD19767.1"/>
    <property type="molecule type" value="Genomic_DNA"/>
</dbReference>
<dbReference type="EMBL" id="AP008208">
    <property type="protein sequence ID" value="BAF08365.1"/>
    <property type="molecule type" value="Genomic_DNA"/>
</dbReference>
<dbReference type="EMBL" id="AP014958">
    <property type="protein sequence ID" value="BAS77920.1"/>
    <property type="molecule type" value="Genomic_DNA"/>
</dbReference>
<dbReference type="EMBL" id="GQ183530">
    <property type="protein sequence ID" value="ACT31340.1"/>
    <property type="molecule type" value="mRNA"/>
</dbReference>
<dbReference type="STRING" id="39947.Q6K537"/>
<dbReference type="PaxDb" id="39947-Q6K537"/>
<dbReference type="EnsemblPlants" id="Os02t0252400-01">
    <property type="protein sequence ID" value="Os02t0252400-01"/>
    <property type="gene ID" value="Os02g0252400"/>
</dbReference>
<dbReference type="Gramene" id="Os02t0252400-01">
    <property type="protein sequence ID" value="Os02t0252400-01"/>
    <property type="gene ID" value="Os02g0252400"/>
</dbReference>
<dbReference type="KEGG" id="dosa:Os02g0252400"/>
<dbReference type="KEGG" id="osa:4328903"/>
<dbReference type="eggNOG" id="ENOG502RB9Y">
    <property type="taxonomic scope" value="Eukaryota"/>
</dbReference>
<dbReference type="HOGENOM" id="CLU_058543_0_0_1"/>
<dbReference type="InParanoid" id="Q6K537"/>
<dbReference type="OMA" id="PRYFCRE"/>
<dbReference type="OrthoDB" id="679380at2759"/>
<dbReference type="Proteomes" id="UP000000763">
    <property type="component" value="Chromosome 2"/>
</dbReference>
<dbReference type="Proteomes" id="UP000059680">
    <property type="component" value="Chromosome 2"/>
</dbReference>
<dbReference type="GO" id="GO:0005634">
    <property type="term" value="C:nucleus"/>
    <property type="evidence" value="ECO:0007669"/>
    <property type="project" value="UniProtKB-SubCell"/>
</dbReference>
<dbReference type="GO" id="GO:0003677">
    <property type="term" value="F:DNA binding"/>
    <property type="evidence" value="ECO:0007669"/>
    <property type="project" value="UniProtKB-KW"/>
</dbReference>
<dbReference type="GO" id="GO:0003700">
    <property type="term" value="F:DNA-binding transcription factor activity"/>
    <property type="evidence" value="ECO:0007669"/>
    <property type="project" value="InterPro"/>
</dbReference>
<dbReference type="GO" id="GO:0008270">
    <property type="term" value="F:zinc ion binding"/>
    <property type="evidence" value="ECO:0007669"/>
    <property type="project" value="UniProtKB-KW"/>
</dbReference>
<dbReference type="InterPro" id="IPR045174">
    <property type="entry name" value="Dof"/>
</dbReference>
<dbReference type="InterPro" id="IPR003851">
    <property type="entry name" value="Znf_Dof"/>
</dbReference>
<dbReference type="PANTHER" id="PTHR31992:SF316">
    <property type="entry name" value="DOF ZINC FINGER PROTEIN DOF1.2"/>
    <property type="match status" value="1"/>
</dbReference>
<dbReference type="PANTHER" id="PTHR31992">
    <property type="entry name" value="DOF ZINC FINGER PROTEIN DOF1.4-RELATED"/>
    <property type="match status" value="1"/>
</dbReference>
<dbReference type="Pfam" id="PF02701">
    <property type="entry name" value="Zn_ribbon_Dof"/>
    <property type="match status" value="1"/>
</dbReference>
<dbReference type="PROSITE" id="PS01361">
    <property type="entry name" value="ZF_DOF_1"/>
    <property type="match status" value="1"/>
</dbReference>
<dbReference type="PROSITE" id="PS50884">
    <property type="entry name" value="ZF_DOF_2"/>
    <property type="match status" value="1"/>
</dbReference>
<feature type="chain" id="PRO_0000441229" description="Dof zinc finger protein 3">
    <location>
        <begin position="1"/>
        <end position="373"/>
    </location>
</feature>
<feature type="zinc finger region" description="Dof-type" evidence="1">
    <location>
        <begin position="45"/>
        <end position="99"/>
    </location>
</feature>
<feature type="region of interest" description="Disordered" evidence="2">
    <location>
        <begin position="1"/>
        <end position="23"/>
    </location>
</feature>
<feature type="region of interest" description="Disordered" evidence="2">
    <location>
        <begin position="297"/>
        <end position="327"/>
    </location>
</feature>
<feature type="compositionally biased region" description="Basic and acidic residues" evidence="2">
    <location>
        <begin position="10"/>
        <end position="23"/>
    </location>
</feature>
<feature type="binding site" evidence="1">
    <location>
        <position position="47"/>
    </location>
    <ligand>
        <name>Zn(2+)</name>
        <dbReference type="ChEBI" id="CHEBI:29105"/>
    </ligand>
</feature>
<feature type="binding site" evidence="1">
    <location>
        <position position="50"/>
    </location>
    <ligand>
        <name>Zn(2+)</name>
        <dbReference type="ChEBI" id="CHEBI:29105"/>
    </ligand>
</feature>
<feature type="binding site" evidence="1">
    <location>
        <position position="72"/>
    </location>
    <ligand>
        <name>Zn(2+)</name>
        <dbReference type="ChEBI" id="CHEBI:29105"/>
    </ligand>
</feature>
<feature type="binding site" evidence="1">
    <location>
        <position position="75"/>
    </location>
    <ligand>
        <name>Zn(2+)</name>
        <dbReference type="ChEBI" id="CHEBI:29105"/>
    </ligand>
</feature>